<gene>
    <name evidence="1" type="primary">ihfB</name>
    <name evidence="1" type="synonym">himD</name>
    <name type="ordered locus">Rleg2_0043</name>
</gene>
<name>IHFB_RHILW</name>
<accession>B5ZN05</accession>
<organism>
    <name type="scientific">Rhizobium leguminosarum bv. trifolii (strain WSM2304)</name>
    <dbReference type="NCBI Taxonomy" id="395492"/>
    <lineage>
        <taxon>Bacteria</taxon>
        <taxon>Pseudomonadati</taxon>
        <taxon>Pseudomonadota</taxon>
        <taxon>Alphaproteobacteria</taxon>
        <taxon>Hyphomicrobiales</taxon>
        <taxon>Rhizobiaceae</taxon>
        <taxon>Rhizobium/Agrobacterium group</taxon>
        <taxon>Rhizobium</taxon>
    </lineage>
</organism>
<sequence length="99" mass="11191">MIKSELVQIVAARNPHLYHRDVENIVNAVLDEITDALAAGNRVELRGFGAFSVKNRPSRSGRNPRTGDTVFVEEKWVPFFKTGKELRERLNPGQADEED</sequence>
<keyword id="KW-0233">DNA recombination</keyword>
<keyword id="KW-0238">DNA-binding</keyword>
<keyword id="KW-1185">Reference proteome</keyword>
<keyword id="KW-0804">Transcription</keyword>
<keyword id="KW-0805">Transcription regulation</keyword>
<keyword id="KW-0810">Translation regulation</keyword>
<feature type="chain" id="PRO_1000122231" description="Integration host factor subunit beta">
    <location>
        <begin position="1"/>
        <end position="99"/>
    </location>
</feature>
<dbReference type="EMBL" id="CP001191">
    <property type="protein sequence ID" value="ACI53346.1"/>
    <property type="molecule type" value="Genomic_DNA"/>
</dbReference>
<dbReference type="RefSeq" id="WP_003544934.1">
    <property type="nucleotide sequence ID" value="NC_011369.1"/>
</dbReference>
<dbReference type="SMR" id="B5ZN05"/>
<dbReference type="STRING" id="395492.Rleg2_0043"/>
<dbReference type="KEGG" id="rlt:Rleg2_0043"/>
<dbReference type="eggNOG" id="COG0776">
    <property type="taxonomic scope" value="Bacteria"/>
</dbReference>
<dbReference type="HOGENOM" id="CLU_105066_2_0_5"/>
<dbReference type="Proteomes" id="UP000008330">
    <property type="component" value="Chromosome"/>
</dbReference>
<dbReference type="GO" id="GO:0005694">
    <property type="term" value="C:chromosome"/>
    <property type="evidence" value="ECO:0007669"/>
    <property type="project" value="InterPro"/>
</dbReference>
<dbReference type="GO" id="GO:0005829">
    <property type="term" value="C:cytosol"/>
    <property type="evidence" value="ECO:0007669"/>
    <property type="project" value="TreeGrafter"/>
</dbReference>
<dbReference type="GO" id="GO:0003677">
    <property type="term" value="F:DNA binding"/>
    <property type="evidence" value="ECO:0007669"/>
    <property type="project" value="UniProtKB-UniRule"/>
</dbReference>
<dbReference type="GO" id="GO:0030527">
    <property type="term" value="F:structural constituent of chromatin"/>
    <property type="evidence" value="ECO:0007669"/>
    <property type="project" value="InterPro"/>
</dbReference>
<dbReference type="GO" id="GO:0006310">
    <property type="term" value="P:DNA recombination"/>
    <property type="evidence" value="ECO:0007669"/>
    <property type="project" value="UniProtKB-UniRule"/>
</dbReference>
<dbReference type="GO" id="GO:0006355">
    <property type="term" value="P:regulation of DNA-templated transcription"/>
    <property type="evidence" value="ECO:0007669"/>
    <property type="project" value="UniProtKB-UniRule"/>
</dbReference>
<dbReference type="GO" id="GO:0006417">
    <property type="term" value="P:regulation of translation"/>
    <property type="evidence" value="ECO:0007669"/>
    <property type="project" value="UniProtKB-UniRule"/>
</dbReference>
<dbReference type="CDD" id="cd13836">
    <property type="entry name" value="IHF_B"/>
    <property type="match status" value="1"/>
</dbReference>
<dbReference type="Gene3D" id="4.10.520.10">
    <property type="entry name" value="IHF-like DNA-binding proteins"/>
    <property type="match status" value="1"/>
</dbReference>
<dbReference type="HAMAP" id="MF_00381">
    <property type="entry name" value="IHF_beta"/>
    <property type="match status" value="1"/>
</dbReference>
<dbReference type="InterPro" id="IPR000119">
    <property type="entry name" value="Hist_DNA-bd"/>
</dbReference>
<dbReference type="InterPro" id="IPR020816">
    <property type="entry name" value="Histone-like_DNA-bd_CS"/>
</dbReference>
<dbReference type="InterPro" id="IPR010992">
    <property type="entry name" value="IHF-like_DNA-bd_dom_sf"/>
</dbReference>
<dbReference type="InterPro" id="IPR005685">
    <property type="entry name" value="IHF_beta"/>
</dbReference>
<dbReference type="NCBIfam" id="TIGR00988">
    <property type="entry name" value="hip"/>
    <property type="match status" value="1"/>
</dbReference>
<dbReference type="NCBIfam" id="NF001222">
    <property type="entry name" value="PRK00199.1"/>
    <property type="match status" value="1"/>
</dbReference>
<dbReference type="PANTHER" id="PTHR33175">
    <property type="entry name" value="DNA-BINDING PROTEIN HU"/>
    <property type="match status" value="1"/>
</dbReference>
<dbReference type="PANTHER" id="PTHR33175:SF5">
    <property type="entry name" value="INTEGRATION HOST FACTOR SUBUNIT BETA"/>
    <property type="match status" value="1"/>
</dbReference>
<dbReference type="Pfam" id="PF00216">
    <property type="entry name" value="Bac_DNA_binding"/>
    <property type="match status" value="1"/>
</dbReference>
<dbReference type="PRINTS" id="PR01727">
    <property type="entry name" value="DNABINDINGHU"/>
</dbReference>
<dbReference type="SMART" id="SM00411">
    <property type="entry name" value="BHL"/>
    <property type="match status" value="1"/>
</dbReference>
<dbReference type="SUPFAM" id="SSF47729">
    <property type="entry name" value="IHF-like DNA-binding proteins"/>
    <property type="match status" value="1"/>
</dbReference>
<dbReference type="PROSITE" id="PS00045">
    <property type="entry name" value="HISTONE_LIKE"/>
    <property type="match status" value="1"/>
</dbReference>
<proteinExistence type="inferred from homology"/>
<reference key="1">
    <citation type="journal article" date="2010" name="Stand. Genomic Sci.">
        <title>Complete genome sequence of Rhizobium leguminosarum bv trifolii strain WSM2304, an effective microsymbiont of the South American clover Trifolium polymorphum.</title>
        <authorList>
            <person name="Reeve W."/>
            <person name="O'Hara G."/>
            <person name="Chain P."/>
            <person name="Ardley J."/>
            <person name="Brau L."/>
            <person name="Nandesena K."/>
            <person name="Tiwari R."/>
            <person name="Malfatti S."/>
            <person name="Kiss H."/>
            <person name="Lapidus A."/>
            <person name="Copeland A."/>
            <person name="Nolan M."/>
            <person name="Land M."/>
            <person name="Ivanova N."/>
            <person name="Mavromatis K."/>
            <person name="Markowitz V."/>
            <person name="Kyrpides N."/>
            <person name="Melino V."/>
            <person name="Denton M."/>
            <person name="Yates R."/>
            <person name="Howieson J."/>
        </authorList>
    </citation>
    <scope>NUCLEOTIDE SEQUENCE [LARGE SCALE GENOMIC DNA]</scope>
    <source>
        <strain>WSM2304</strain>
    </source>
</reference>
<comment type="function">
    <text evidence="1">This protein is one of the two subunits of integration host factor, a specific DNA-binding protein that functions in genetic recombination as well as in transcriptional and translational control.</text>
</comment>
<comment type="subunit">
    <text evidence="1">Heterodimer of an alpha and a beta chain.</text>
</comment>
<comment type="similarity">
    <text evidence="1">Belongs to the bacterial histone-like protein family.</text>
</comment>
<evidence type="ECO:0000255" key="1">
    <source>
        <dbReference type="HAMAP-Rule" id="MF_00381"/>
    </source>
</evidence>
<protein>
    <recommendedName>
        <fullName evidence="1">Integration host factor subunit beta</fullName>
        <shortName evidence="1">IHF-beta</shortName>
    </recommendedName>
</protein>